<dbReference type="GO" id="GO:0005576">
    <property type="term" value="C:extracellular region"/>
    <property type="evidence" value="ECO:0007669"/>
    <property type="project" value="UniProtKB-SubCell"/>
</dbReference>
<dbReference type="GO" id="GO:0007218">
    <property type="term" value="P:neuropeptide signaling pathway"/>
    <property type="evidence" value="ECO:0007669"/>
    <property type="project" value="UniProtKB-KW"/>
</dbReference>
<name>FAR2_AUSGA</name>
<protein>
    <recommendedName>
        <fullName evidence="4">Extended FMRFamide-2</fullName>
        <shortName evidence="4">FMRFa-2</shortName>
    </recommendedName>
</protein>
<reference evidence="5" key="1">
    <citation type="journal article" date="2012" name="Syst. Biol.">
        <title>Peptidomics-based phylogeny and biogeography of Mantophasmatodea (Hexapoda).</title>
        <authorList>
            <person name="Predel R."/>
            <person name="Neupert S."/>
            <person name="Huetteroth W."/>
            <person name="Kahnt J."/>
            <person name="Waidelich D."/>
            <person name="Roth S."/>
        </authorList>
    </citation>
    <scope>PROTEIN SEQUENCE</scope>
    <source>
        <tissue evidence="3">Thoracic perisympathetic organs</tissue>
    </source>
</reference>
<sequence>PDYLQLARA</sequence>
<comment type="function">
    <text evidence="1">FMRFamides and FMRFamide-like peptides are neuropeptides.</text>
</comment>
<comment type="subcellular location">
    <subcellularLocation>
        <location evidence="6">Secreted</location>
    </subcellularLocation>
</comment>
<comment type="similarity">
    <text evidence="2">Belongs to the FARP (FMRF amide related peptide) family.</text>
</comment>
<organism>
    <name type="scientific">Austrophasma gansbaaiense</name>
    <name type="common">Gladiator</name>
    <name type="synonym">Heel-walker</name>
    <dbReference type="NCBI Taxonomy" id="253136"/>
    <lineage>
        <taxon>Eukaryota</taxon>
        <taxon>Metazoa</taxon>
        <taxon>Ecdysozoa</taxon>
        <taxon>Arthropoda</taxon>
        <taxon>Hexapoda</taxon>
        <taxon>Insecta</taxon>
        <taxon>Pterygota</taxon>
        <taxon>Neoptera</taxon>
        <taxon>Polyneoptera</taxon>
        <taxon>Mantophasmatodea</taxon>
        <taxon>Austrophasmatidae</taxon>
        <taxon>Austrophasma</taxon>
    </lineage>
</organism>
<accession>B3A0E0</accession>
<proteinExistence type="evidence at protein level"/>
<evidence type="ECO:0000250" key="1">
    <source>
        <dbReference type="UniProtKB" id="P34405"/>
    </source>
</evidence>
<evidence type="ECO:0000255" key="2"/>
<evidence type="ECO:0000269" key="3">
    <source>
    </source>
</evidence>
<evidence type="ECO:0000303" key="4">
    <source>
    </source>
</evidence>
<evidence type="ECO:0000305" key="5"/>
<evidence type="ECO:0000305" key="6">
    <source>
    </source>
</evidence>
<feature type="peptide" id="PRO_0000421484" description="Extended FMRFamide-2" evidence="3">
    <location>
        <begin position="1"/>
        <end position="9"/>
    </location>
</feature>
<feature type="unsure residue" description="L or I" evidence="3">
    <location>
        <position position="4"/>
    </location>
</feature>
<feature type="unsure residue" description="L or I" evidence="3">
    <location>
        <position position="6"/>
    </location>
</feature>
<keyword id="KW-0903">Direct protein sequencing</keyword>
<keyword id="KW-0527">Neuropeptide</keyword>
<keyword id="KW-0964">Secreted</keyword>